<protein>
    <recommendedName>
        <fullName evidence="1">Mannitol-1-phosphate 5-dehydrogenase</fullName>
        <ecNumber evidence="1">1.1.1.17</ecNumber>
    </recommendedName>
</protein>
<evidence type="ECO:0000255" key="1">
    <source>
        <dbReference type="HAMAP-Rule" id="MF_00196"/>
    </source>
</evidence>
<sequence>MKALHFGAGNIGRGFIGKLLADAGAQLTFADVNQPLLDALNKRKSYQVNVVGEQARVEEVKNVSAVNSGSPEVVALIAEADIVTTAVGPQILARIAATVAQGLITRHQQGNTRPLNIIACENMVRGTSQLKQHVFAALSEDEQIWVEQHVGFVDSAVDRIVPPSEAGSTDILAVTVETFSEWIVDGTQFKGQPPEIVGMELTDNLMAFVERKLFTLNTGHAITAYLGQLAGHQTIRDAILDPAVRQTVKGAMEESGAVLIKRYAFDPQKHAAYINKILSRFENPYLHDDVERVGRQPLRKLSAGDRLIKPLLGTLEYQLPHDSLVTGIAAAMSYRSEQDPQAQELVTLLAQLGPKAALAQISGLPADSEVVEQAVSVYNAMQQKLAH</sequence>
<accession>A7FP92</accession>
<reference key="1">
    <citation type="journal article" date="2007" name="PLoS Genet.">
        <title>The complete genome sequence of Yersinia pseudotuberculosis IP31758, the causative agent of Far East scarlet-like fever.</title>
        <authorList>
            <person name="Eppinger M."/>
            <person name="Rosovitz M.J."/>
            <person name="Fricke W.F."/>
            <person name="Rasko D.A."/>
            <person name="Kokorina G."/>
            <person name="Fayolle C."/>
            <person name="Lindler L.E."/>
            <person name="Carniel E."/>
            <person name="Ravel J."/>
        </authorList>
    </citation>
    <scope>NUCLEOTIDE SEQUENCE [LARGE SCALE GENOMIC DNA]</scope>
    <source>
        <strain>IP 31758</strain>
    </source>
</reference>
<keyword id="KW-0520">NAD</keyword>
<keyword id="KW-0560">Oxidoreductase</keyword>
<comment type="catalytic activity">
    <reaction evidence="1">
        <text>D-mannitol 1-phosphate + NAD(+) = beta-D-fructose 6-phosphate + NADH + H(+)</text>
        <dbReference type="Rhea" id="RHEA:19661"/>
        <dbReference type="ChEBI" id="CHEBI:15378"/>
        <dbReference type="ChEBI" id="CHEBI:57540"/>
        <dbReference type="ChEBI" id="CHEBI:57634"/>
        <dbReference type="ChEBI" id="CHEBI:57945"/>
        <dbReference type="ChEBI" id="CHEBI:61381"/>
        <dbReference type="EC" id="1.1.1.17"/>
    </reaction>
</comment>
<comment type="similarity">
    <text evidence="1">Belongs to the mannitol dehydrogenase family.</text>
</comment>
<dbReference type="EC" id="1.1.1.17" evidence="1"/>
<dbReference type="EMBL" id="CP000720">
    <property type="protein sequence ID" value="ABS46756.1"/>
    <property type="molecule type" value="Genomic_DNA"/>
</dbReference>
<dbReference type="RefSeq" id="WP_012105967.1">
    <property type="nucleotide sequence ID" value="NC_009708.1"/>
</dbReference>
<dbReference type="SMR" id="A7FP92"/>
<dbReference type="KEGG" id="ypi:YpsIP31758_4127"/>
<dbReference type="HOGENOM" id="CLU_036089_2_0_6"/>
<dbReference type="Proteomes" id="UP000002412">
    <property type="component" value="Chromosome"/>
</dbReference>
<dbReference type="GO" id="GO:0005829">
    <property type="term" value="C:cytosol"/>
    <property type="evidence" value="ECO:0007669"/>
    <property type="project" value="TreeGrafter"/>
</dbReference>
<dbReference type="GO" id="GO:0008926">
    <property type="term" value="F:mannitol-1-phosphate 5-dehydrogenase activity"/>
    <property type="evidence" value="ECO:0007669"/>
    <property type="project" value="UniProtKB-UniRule"/>
</dbReference>
<dbReference type="GO" id="GO:0019592">
    <property type="term" value="P:mannitol catabolic process"/>
    <property type="evidence" value="ECO:0007669"/>
    <property type="project" value="TreeGrafter"/>
</dbReference>
<dbReference type="FunFam" id="1.10.1040.10:FF:000009">
    <property type="entry name" value="Mannitol-1-phosphate 5-dehydrogenase"/>
    <property type="match status" value="1"/>
</dbReference>
<dbReference type="FunFam" id="3.40.50.720:FF:000075">
    <property type="entry name" value="Mannitol-1-phosphate 5-dehydrogenase"/>
    <property type="match status" value="1"/>
</dbReference>
<dbReference type="Gene3D" id="1.10.1040.10">
    <property type="entry name" value="N-(1-d-carboxylethyl)-l-norvaline Dehydrogenase, domain 2"/>
    <property type="match status" value="1"/>
</dbReference>
<dbReference type="Gene3D" id="3.40.50.720">
    <property type="entry name" value="NAD(P)-binding Rossmann-like Domain"/>
    <property type="match status" value="1"/>
</dbReference>
<dbReference type="HAMAP" id="MF_00196">
    <property type="entry name" value="Mannitol_dehydrog"/>
    <property type="match status" value="1"/>
</dbReference>
<dbReference type="InterPro" id="IPR008927">
    <property type="entry name" value="6-PGluconate_DH-like_C_sf"/>
</dbReference>
<dbReference type="InterPro" id="IPR013328">
    <property type="entry name" value="6PGD_dom2"/>
</dbReference>
<dbReference type="InterPro" id="IPR023028">
    <property type="entry name" value="Mannitol_1_phos_5_DH"/>
</dbReference>
<dbReference type="InterPro" id="IPR000669">
    <property type="entry name" value="Mannitol_DH"/>
</dbReference>
<dbReference type="InterPro" id="IPR013118">
    <property type="entry name" value="Mannitol_DH_C"/>
</dbReference>
<dbReference type="InterPro" id="IPR023027">
    <property type="entry name" value="Mannitol_DH_CS"/>
</dbReference>
<dbReference type="InterPro" id="IPR013131">
    <property type="entry name" value="Mannitol_DH_N"/>
</dbReference>
<dbReference type="InterPro" id="IPR036291">
    <property type="entry name" value="NAD(P)-bd_dom_sf"/>
</dbReference>
<dbReference type="NCBIfam" id="NF002646">
    <property type="entry name" value="PRK02318.1-2"/>
    <property type="match status" value="1"/>
</dbReference>
<dbReference type="NCBIfam" id="NF002647">
    <property type="entry name" value="PRK02318.1-3"/>
    <property type="match status" value="1"/>
</dbReference>
<dbReference type="NCBIfam" id="NF002650">
    <property type="entry name" value="PRK02318.2-2"/>
    <property type="match status" value="1"/>
</dbReference>
<dbReference type="NCBIfam" id="NF002652">
    <property type="entry name" value="PRK02318.2-5"/>
    <property type="match status" value="1"/>
</dbReference>
<dbReference type="PANTHER" id="PTHR30524:SF0">
    <property type="entry name" value="ALTRONATE OXIDOREDUCTASE-RELATED"/>
    <property type="match status" value="1"/>
</dbReference>
<dbReference type="PANTHER" id="PTHR30524">
    <property type="entry name" value="MANNITOL-1-PHOSPHATE 5-DEHYDROGENASE"/>
    <property type="match status" value="1"/>
</dbReference>
<dbReference type="Pfam" id="PF01232">
    <property type="entry name" value="Mannitol_dh"/>
    <property type="match status" value="1"/>
</dbReference>
<dbReference type="Pfam" id="PF08125">
    <property type="entry name" value="Mannitol_dh_C"/>
    <property type="match status" value="1"/>
</dbReference>
<dbReference type="PRINTS" id="PR00084">
    <property type="entry name" value="MTLDHDRGNASE"/>
</dbReference>
<dbReference type="SUPFAM" id="SSF48179">
    <property type="entry name" value="6-phosphogluconate dehydrogenase C-terminal domain-like"/>
    <property type="match status" value="1"/>
</dbReference>
<dbReference type="SUPFAM" id="SSF51735">
    <property type="entry name" value="NAD(P)-binding Rossmann-fold domains"/>
    <property type="match status" value="1"/>
</dbReference>
<dbReference type="PROSITE" id="PS00974">
    <property type="entry name" value="MANNITOL_DHGENASE"/>
    <property type="match status" value="1"/>
</dbReference>
<gene>
    <name evidence="1" type="primary">mtlD</name>
    <name type="ordered locus">YpsIP31758_4127</name>
</gene>
<feature type="chain" id="PRO_1000058534" description="Mannitol-1-phosphate 5-dehydrogenase">
    <location>
        <begin position="1"/>
        <end position="387"/>
    </location>
</feature>
<feature type="binding site" evidence="1">
    <location>
        <begin position="3"/>
        <end position="14"/>
    </location>
    <ligand>
        <name>NAD(+)</name>
        <dbReference type="ChEBI" id="CHEBI:57540"/>
    </ligand>
</feature>
<name>MTLD_YERP3</name>
<proteinExistence type="inferred from homology"/>
<organism>
    <name type="scientific">Yersinia pseudotuberculosis serotype O:1b (strain IP 31758)</name>
    <dbReference type="NCBI Taxonomy" id="349747"/>
    <lineage>
        <taxon>Bacteria</taxon>
        <taxon>Pseudomonadati</taxon>
        <taxon>Pseudomonadota</taxon>
        <taxon>Gammaproteobacteria</taxon>
        <taxon>Enterobacterales</taxon>
        <taxon>Yersiniaceae</taxon>
        <taxon>Yersinia</taxon>
    </lineage>
</organism>